<reference key="1">
    <citation type="journal article" date="2018" name="Environ. Microbiol.">
        <title>Enfumafungin synthase represents a novel lineage of fungal triterpene cyclases.</title>
        <authorList>
            <person name="Kuhnert E."/>
            <person name="Li Y."/>
            <person name="Lan N."/>
            <person name="Yue Q."/>
            <person name="Chen L."/>
            <person name="Cox R.J."/>
            <person name="An Z."/>
            <person name="Yokoyama K."/>
            <person name="Bills G.F."/>
        </authorList>
    </citation>
    <scope>NUCLEOTIDE SEQUENCE [GENOMIC DNA]</scope>
    <scope>FUNCTION</scope>
    <scope>PATHWAY</scope>
</reference>
<proteinExistence type="inferred from homology"/>
<evidence type="ECO:0000250" key="1">
    <source>
        <dbReference type="UniProtKB" id="P04798"/>
    </source>
</evidence>
<evidence type="ECO:0000255" key="2"/>
<evidence type="ECO:0000269" key="3">
    <source>
    </source>
</evidence>
<evidence type="ECO:0000303" key="4">
    <source>
    </source>
</evidence>
<evidence type="ECO:0000305" key="5"/>
<evidence type="ECO:0000305" key="6">
    <source>
    </source>
</evidence>
<keyword id="KW-0349">Heme</keyword>
<keyword id="KW-0408">Iron</keyword>
<keyword id="KW-0472">Membrane</keyword>
<keyword id="KW-0479">Metal-binding</keyword>
<keyword id="KW-0503">Monooxygenase</keyword>
<keyword id="KW-0560">Oxidoreductase</keyword>
<keyword id="KW-0812">Transmembrane</keyword>
<keyword id="KW-1133">Transmembrane helix</keyword>
<sequence>MVHLASIVSDLGFWPTVAGTVATYLFYQIVATVYDVYFGPMSNIPGPKLWAASHIPYILMLWNGEDASTKLALHEKYGPVVRVSPTELSYREAQAWKDIYGHQTRGKKSFPKDSRFYAPAVNGAPSILNADDPTHTRHRRILAHAFSDKALKEQEPLLKKWSDMLVSKLKENVEKSPSTPLDLVSWFNFTTFDIMADLTFAEPLYMLEGSTYSPWVRTIFGSLKLGSRLRAVRILPGMTTFINMIMPNSMRQKQVEHFKYSADRVDKRLANKNLDRPDLWAQVLKRVDVDGMSMSVAEMHSNSAIFMLAGTETTATLLSGLTYHLLQNPATMSKLVNEVRSTFPTRDDINVETLQRLPYLNACLEEGMRMYPPVATGLPRLTPKGGAAICGTWIPEDVAVSVSQWSTYQCEENFHKAKLFIPERWMGEDEQFANDNHAAFQPFSTGPRNCIGRNLAYHEARLLLCEVLWNFDLTLDEKSEDWLNQPVFTVWEKDPLWVRLQVASR</sequence>
<feature type="chain" id="PRO_0000454457" description="Cytochrome P450 monooxygenase efuB">
    <location>
        <begin position="1"/>
        <end position="505"/>
    </location>
</feature>
<feature type="transmembrane region" description="Helical" evidence="2">
    <location>
        <begin position="12"/>
        <end position="34"/>
    </location>
</feature>
<feature type="binding site" description="axial binding residue" evidence="1">
    <location>
        <position position="450"/>
    </location>
    <ligand>
        <name>heme</name>
        <dbReference type="ChEBI" id="CHEBI:30413"/>
    </ligand>
    <ligandPart>
        <name>Fe</name>
        <dbReference type="ChEBI" id="CHEBI:18248"/>
    </ligandPart>
</feature>
<accession>A0A2Z4HPZ7</accession>
<protein>
    <recommendedName>
        <fullName evidence="4">Cytochrome P450 monooxygenase efuB</fullName>
        <ecNumber evidence="6">1.-.-.-</ecNumber>
    </recommendedName>
    <alternativeName>
        <fullName evidence="4">Enfumafungin biosynthesis cluster protein B</fullName>
    </alternativeName>
</protein>
<dbReference type="EC" id="1.-.-.-" evidence="6"/>
<dbReference type="EMBL" id="MF611883">
    <property type="protein sequence ID" value="AWW17211.1"/>
    <property type="molecule type" value="Genomic_DNA"/>
</dbReference>
<dbReference type="SMR" id="A0A2Z4HPZ7"/>
<dbReference type="UniPathway" id="UPA00213"/>
<dbReference type="GO" id="GO:0016020">
    <property type="term" value="C:membrane"/>
    <property type="evidence" value="ECO:0007669"/>
    <property type="project" value="UniProtKB-SubCell"/>
</dbReference>
<dbReference type="GO" id="GO:0020037">
    <property type="term" value="F:heme binding"/>
    <property type="evidence" value="ECO:0007669"/>
    <property type="project" value="InterPro"/>
</dbReference>
<dbReference type="GO" id="GO:0005506">
    <property type="term" value="F:iron ion binding"/>
    <property type="evidence" value="ECO:0007669"/>
    <property type="project" value="InterPro"/>
</dbReference>
<dbReference type="GO" id="GO:0004497">
    <property type="term" value="F:monooxygenase activity"/>
    <property type="evidence" value="ECO:0007669"/>
    <property type="project" value="UniProtKB-KW"/>
</dbReference>
<dbReference type="GO" id="GO:0016705">
    <property type="term" value="F:oxidoreductase activity, acting on paired donors, with incorporation or reduction of molecular oxygen"/>
    <property type="evidence" value="ECO:0007669"/>
    <property type="project" value="InterPro"/>
</dbReference>
<dbReference type="GO" id="GO:0016114">
    <property type="term" value="P:terpenoid biosynthetic process"/>
    <property type="evidence" value="ECO:0007669"/>
    <property type="project" value="UniProtKB-UniPathway"/>
</dbReference>
<dbReference type="CDD" id="cd11058">
    <property type="entry name" value="CYP60B-like"/>
    <property type="match status" value="1"/>
</dbReference>
<dbReference type="FunFam" id="1.10.630.10:FF:000047">
    <property type="entry name" value="Cytochrome P450 monooxygenase"/>
    <property type="match status" value="1"/>
</dbReference>
<dbReference type="Gene3D" id="1.10.630.10">
    <property type="entry name" value="Cytochrome P450"/>
    <property type="match status" value="1"/>
</dbReference>
<dbReference type="InterPro" id="IPR001128">
    <property type="entry name" value="Cyt_P450"/>
</dbReference>
<dbReference type="InterPro" id="IPR017972">
    <property type="entry name" value="Cyt_P450_CS"/>
</dbReference>
<dbReference type="InterPro" id="IPR002401">
    <property type="entry name" value="Cyt_P450_E_grp-I"/>
</dbReference>
<dbReference type="InterPro" id="IPR036396">
    <property type="entry name" value="Cyt_P450_sf"/>
</dbReference>
<dbReference type="InterPro" id="IPR050121">
    <property type="entry name" value="Cytochrome_P450_monoxygenase"/>
</dbReference>
<dbReference type="PANTHER" id="PTHR24305">
    <property type="entry name" value="CYTOCHROME P450"/>
    <property type="match status" value="1"/>
</dbReference>
<dbReference type="PANTHER" id="PTHR24305:SF210">
    <property type="entry name" value="CYTOCHROME P450 MONOOXYGENASE ASQL-RELATED"/>
    <property type="match status" value="1"/>
</dbReference>
<dbReference type="Pfam" id="PF00067">
    <property type="entry name" value="p450"/>
    <property type="match status" value="1"/>
</dbReference>
<dbReference type="PRINTS" id="PR00463">
    <property type="entry name" value="EP450I"/>
</dbReference>
<dbReference type="PRINTS" id="PR00385">
    <property type="entry name" value="P450"/>
</dbReference>
<dbReference type="SUPFAM" id="SSF48264">
    <property type="entry name" value="Cytochrome P450"/>
    <property type="match status" value="1"/>
</dbReference>
<dbReference type="PROSITE" id="PS00086">
    <property type="entry name" value="CYTOCHROME_P450"/>
    <property type="match status" value="1"/>
</dbReference>
<name>EFUB_HORCR</name>
<gene>
    <name evidence="4" type="primary">efuB</name>
</gene>
<organism>
    <name type="scientific">Hormonema carpetanum</name>
    <dbReference type="NCBI Taxonomy" id="284138"/>
    <lineage>
        <taxon>Eukaryota</taxon>
        <taxon>Fungi</taxon>
        <taxon>Dikarya</taxon>
        <taxon>Ascomycota</taxon>
        <taxon>Pezizomycotina</taxon>
        <taxon>Dothideomycetes</taxon>
        <taxon>Dothideomycetidae</taxon>
        <taxon>Dothideales</taxon>
        <taxon>Dothioraceae</taxon>
        <taxon>Hormonema</taxon>
    </lineage>
</organism>
<comment type="function">
    <text evidence="3 6">Cytochrome P450 monooxygenase; part of the gene cluster that mediates the biosynthesis of enfumafungin, a glycosylated fernene-type triterpenoid with potent antifungal activity, mediated by its interaction with beta-1,3-glucan synthase and the fungal cell wall (PubMed:30051576). The pathway begins with the terpene cyclase-glycosyl transferase fusion protein that most likely uses 2,3-oxidosqualene as substrate and catalyzes glycosylation immediately after cyclization (Probable). The fernene glycoside then could be processed by the desaturase efuI which catalyzes isomerization of a double bond established by efuA to form the core structure (Probable). The latter would then undergo a series of hydroxylations in unknown order at C-2, C-19, C-23 and C-25, which would be catalyzed by two of the three cytochrome P450 monooxygenases efuB, efuG or efuH (Probable). The hydroxy-group at C-25 becomes oxidized by the dehydrogenase efuE to enable a spontaneous, non-enzymatic hemiacetal formation with C-23 (Probable). After hydroxylation at C-2, acetylation by the acetyltransferase efuC takes place (Probable). The final steps in enfumafungin biosynthesis require expansion of the 5-membered ring by lactonization via a Baeyer-Villiger reaction mediated by one of the BGC's cytochrome P450 monooxygenases (efuB, efuG or efuH) followed by ring cleavage (Probable). This type of reaction would establish a double bond between C-20 and C-21 which could be reduced by the reductase efuL to form the final product (Probable).</text>
</comment>
<comment type="cofactor">
    <cofactor evidence="1">
        <name>heme</name>
        <dbReference type="ChEBI" id="CHEBI:30413"/>
    </cofactor>
</comment>
<comment type="pathway">
    <text evidence="6">Secondary metabolite biosynthesis; terpenoid biosynthesis.</text>
</comment>
<comment type="subcellular location">
    <subcellularLocation>
        <location evidence="2">Membrane</location>
        <topology evidence="2">Single-pass membrane protein</topology>
    </subcellularLocation>
</comment>
<comment type="similarity">
    <text evidence="5">Belongs to the cytochrome P450 family.</text>
</comment>